<name>STX17_RAT</name>
<dbReference type="EMBL" id="AF115435">
    <property type="protein sequence ID" value="AAD11435.1"/>
    <property type="molecule type" value="mRNA"/>
</dbReference>
<dbReference type="RefSeq" id="NP_663775.1">
    <property type="nucleotide sequence ID" value="NM_145723.2"/>
</dbReference>
<dbReference type="RefSeq" id="XP_006238086.1">
    <property type="nucleotide sequence ID" value="XM_006238024.4"/>
</dbReference>
<dbReference type="RefSeq" id="XP_017448641.1">
    <property type="nucleotide sequence ID" value="XM_017593152.3"/>
</dbReference>
<dbReference type="SMR" id="Q9Z158"/>
<dbReference type="BioGRID" id="251633">
    <property type="interactions" value="1"/>
</dbReference>
<dbReference type="FunCoup" id="Q9Z158">
    <property type="interactions" value="2893"/>
</dbReference>
<dbReference type="STRING" id="10116.ENSRNOP00000007641"/>
<dbReference type="iPTMnet" id="Q9Z158"/>
<dbReference type="PhosphoSitePlus" id="Q9Z158"/>
<dbReference type="PaxDb" id="10116-ENSRNOP00000007641"/>
<dbReference type="Ensembl" id="ENSRNOT00000007641.5">
    <property type="protein sequence ID" value="ENSRNOP00000007641.2"/>
    <property type="gene ID" value="ENSRNOG00000005801.7"/>
</dbReference>
<dbReference type="GeneID" id="252853"/>
<dbReference type="KEGG" id="rno:252853"/>
<dbReference type="UCSC" id="RGD:708499">
    <property type="organism name" value="rat"/>
</dbReference>
<dbReference type="AGR" id="RGD:708499"/>
<dbReference type="CTD" id="55014"/>
<dbReference type="RGD" id="708499">
    <property type="gene designation" value="Stx17"/>
</dbReference>
<dbReference type="eggNOG" id="KOG0811">
    <property type="taxonomic scope" value="Eukaryota"/>
</dbReference>
<dbReference type="GeneTree" id="ENSGT01000000214440"/>
<dbReference type="HOGENOM" id="CLU_058244_1_0_1"/>
<dbReference type="InParanoid" id="Q9Z158"/>
<dbReference type="OMA" id="YPVMGAL"/>
<dbReference type="OrthoDB" id="10035606at2759"/>
<dbReference type="PhylomeDB" id="Q9Z158"/>
<dbReference type="TreeFam" id="TF323947"/>
<dbReference type="Reactome" id="R-RNO-204005">
    <property type="pathway name" value="COPII-mediated vesicle transport"/>
</dbReference>
<dbReference type="PRO" id="PR:Q9Z158"/>
<dbReference type="Proteomes" id="UP000002494">
    <property type="component" value="Chromosome 5"/>
</dbReference>
<dbReference type="Bgee" id="ENSRNOG00000005801">
    <property type="expression patterns" value="Expressed in liver and 18 other cell types or tissues"/>
</dbReference>
<dbReference type="GO" id="GO:0120281">
    <property type="term" value="C:autolysosome membrane"/>
    <property type="evidence" value="ECO:0000250"/>
    <property type="project" value="UniProtKB"/>
</dbReference>
<dbReference type="GO" id="GO:0005776">
    <property type="term" value="C:autophagosome"/>
    <property type="evidence" value="ECO:0000250"/>
    <property type="project" value="UniProtKB"/>
</dbReference>
<dbReference type="GO" id="GO:0000421">
    <property type="term" value="C:autophagosome membrane"/>
    <property type="evidence" value="ECO:0000250"/>
    <property type="project" value="UniProtKB"/>
</dbReference>
<dbReference type="GO" id="GO:0030134">
    <property type="term" value="C:COPII-coated ER to Golgi transport vesicle"/>
    <property type="evidence" value="ECO:0000314"/>
    <property type="project" value="UniProtKB"/>
</dbReference>
<dbReference type="GO" id="GO:0005829">
    <property type="term" value="C:cytosol"/>
    <property type="evidence" value="ECO:0000314"/>
    <property type="project" value="UniProtKB"/>
</dbReference>
<dbReference type="GO" id="GO:0012505">
    <property type="term" value="C:endomembrane system"/>
    <property type="evidence" value="ECO:0000318"/>
    <property type="project" value="GO_Central"/>
</dbReference>
<dbReference type="GO" id="GO:0005789">
    <property type="term" value="C:endoplasmic reticulum membrane"/>
    <property type="evidence" value="ECO:0000250"/>
    <property type="project" value="UniProtKB"/>
</dbReference>
<dbReference type="GO" id="GO:0005793">
    <property type="term" value="C:endoplasmic reticulum-Golgi intermediate compartment"/>
    <property type="evidence" value="ECO:0000314"/>
    <property type="project" value="UniProtKB"/>
</dbReference>
<dbReference type="GO" id="GO:0033116">
    <property type="term" value="C:endoplasmic reticulum-Golgi intermediate compartment membrane"/>
    <property type="evidence" value="ECO:0007669"/>
    <property type="project" value="UniProtKB-SubCell"/>
</dbReference>
<dbReference type="GO" id="GO:0012507">
    <property type="term" value="C:ER to Golgi transport vesicle membrane"/>
    <property type="evidence" value="ECO:0007669"/>
    <property type="project" value="UniProtKB-SubCell"/>
</dbReference>
<dbReference type="GO" id="GO:0030897">
    <property type="term" value="C:HOPS complex"/>
    <property type="evidence" value="ECO:0000266"/>
    <property type="project" value="RGD"/>
</dbReference>
<dbReference type="GO" id="GO:0044233">
    <property type="term" value="C:mitochondria-associated endoplasmic reticulum membrane contact site"/>
    <property type="evidence" value="ECO:0000266"/>
    <property type="project" value="RGD"/>
</dbReference>
<dbReference type="GO" id="GO:0005739">
    <property type="term" value="C:mitochondrion"/>
    <property type="evidence" value="ECO:0000250"/>
    <property type="project" value="UniProtKB"/>
</dbReference>
<dbReference type="GO" id="GO:0005886">
    <property type="term" value="C:plasma membrane"/>
    <property type="evidence" value="ECO:0000318"/>
    <property type="project" value="GO_Central"/>
</dbReference>
<dbReference type="GO" id="GO:0030868">
    <property type="term" value="C:smooth endoplasmic reticulum membrane"/>
    <property type="evidence" value="ECO:0000314"/>
    <property type="project" value="UniProtKB"/>
</dbReference>
<dbReference type="GO" id="GO:0031201">
    <property type="term" value="C:SNARE complex"/>
    <property type="evidence" value="ECO:0000250"/>
    <property type="project" value="UniProtKB"/>
</dbReference>
<dbReference type="GO" id="GO:0019901">
    <property type="term" value="F:protein kinase binding"/>
    <property type="evidence" value="ECO:0000353"/>
    <property type="project" value="UniProtKB"/>
</dbReference>
<dbReference type="GO" id="GO:0019903">
    <property type="term" value="F:protein phosphatase binding"/>
    <property type="evidence" value="ECO:0000266"/>
    <property type="project" value="RGD"/>
</dbReference>
<dbReference type="GO" id="GO:0005484">
    <property type="term" value="F:SNAP receptor activity"/>
    <property type="evidence" value="ECO:0000250"/>
    <property type="project" value="UniProtKB"/>
</dbReference>
<dbReference type="GO" id="GO:0000149">
    <property type="term" value="F:SNARE binding"/>
    <property type="evidence" value="ECO:0000353"/>
    <property type="project" value="UniProtKB"/>
</dbReference>
<dbReference type="GO" id="GO:0097352">
    <property type="term" value="P:autophagosome maturation"/>
    <property type="evidence" value="ECO:0000250"/>
    <property type="project" value="UniProtKB"/>
</dbReference>
<dbReference type="GO" id="GO:0016240">
    <property type="term" value="P:autophagosome membrane docking"/>
    <property type="evidence" value="ECO:0000266"/>
    <property type="project" value="RGD"/>
</dbReference>
<dbReference type="GO" id="GO:0061909">
    <property type="term" value="P:autophagosome-lysosome fusion"/>
    <property type="evidence" value="ECO:0000250"/>
    <property type="project" value="UniProtKB"/>
</dbReference>
<dbReference type="GO" id="GO:0006888">
    <property type="term" value="P:endoplasmic reticulum to Golgi vesicle-mediated transport"/>
    <property type="evidence" value="ECO:0000250"/>
    <property type="project" value="UniProtKB"/>
</dbReference>
<dbReference type="GO" id="GO:0097111">
    <property type="term" value="P:endoplasmic reticulum-Golgi intermediate compartment organization"/>
    <property type="evidence" value="ECO:0000250"/>
    <property type="project" value="UniProtKB"/>
</dbReference>
<dbReference type="GO" id="GO:0006887">
    <property type="term" value="P:exocytosis"/>
    <property type="evidence" value="ECO:0000318"/>
    <property type="project" value="GO_Central"/>
</dbReference>
<dbReference type="GO" id="GO:0007030">
    <property type="term" value="P:Golgi organization"/>
    <property type="evidence" value="ECO:0000250"/>
    <property type="project" value="UniProtKB"/>
</dbReference>
<dbReference type="GO" id="GO:0006886">
    <property type="term" value="P:intracellular protein transport"/>
    <property type="evidence" value="ECO:0000318"/>
    <property type="project" value="GO_Central"/>
</dbReference>
<dbReference type="GO" id="GO:0034497">
    <property type="term" value="P:protein localization to phagophore assembly site"/>
    <property type="evidence" value="ECO:0000266"/>
    <property type="project" value="RGD"/>
</dbReference>
<dbReference type="GO" id="GO:0048278">
    <property type="term" value="P:vesicle docking"/>
    <property type="evidence" value="ECO:0000318"/>
    <property type="project" value="GO_Central"/>
</dbReference>
<dbReference type="GO" id="GO:0006906">
    <property type="term" value="P:vesicle fusion"/>
    <property type="evidence" value="ECO:0000318"/>
    <property type="project" value="GO_Central"/>
</dbReference>
<dbReference type="CDD" id="cd15846">
    <property type="entry name" value="SNARE_syntaxin17"/>
    <property type="match status" value="1"/>
</dbReference>
<dbReference type="FunFam" id="1.20.5.110:FF:000046">
    <property type="entry name" value="syntaxin-17 isoform X1"/>
    <property type="match status" value="1"/>
</dbReference>
<dbReference type="Gene3D" id="1.20.5.110">
    <property type="match status" value="1"/>
</dbReference>
<dbReference type="InterPro" id="IPR010989">
    <property type="entry name" value="SNARE"/>
</dbReference>
<dbReference type="InterPro" id="IPR028676">
    <property type="entry name" value="STX17_SNARE"/>
</dbReference>
<dbReference type="InterPro" id="IPR045242">
    <property type="entry name" value="Syntaxin"/>
</dbReference>
<dbReference type="InterPro" id="IPR006012">
    <property type="entry name" value="Syntaxin/epimorphin_CS"/>
</dbReference>
<dbReference type="InterPro" id="IPR000727">
    <property type="entry name" value="T_SNARE_dom"/>
</dbReference>
<dbReference type="PANTHER" id="PTHR19957">
    <property type="entry name" value="SYNTAXIN"/>
    <property type="match status" value="1"/>
</dbReference>
<dbReference type="PANTHER" id="PTHR19957:SF139">
    <property type="entry name" value="SYNTAXIN-17"/>
    <property type="match status" value="1"/>
</dbReference>
<dbReference type="SMART" id="SM00397">
    <property type="entry name" value="t_SNARE"/>
    <property type="match status" value="1"/>
</dbReference>
<dbReference type="SUPFAM" id="SSF47661">
    <property type="entry name" value="t-snare proteins"/>
    <property type="match status" value="1"/>
</dbReference>
<dbReference type="PROSITE" id="PS00914">
    <property type="entry name" value="SYNTAXIN"/>
    <property type="match status" value="1"/>
</dbReference>
<dbReference type="PROSITE" id="PS50192">
    <property type="entry name" value="T_SNARE"/>
    <property type="match status" value="1"/>
</dbReference>
<protein>
    <recommendedName>
        <fullName evidence="8">Syntaxin-17</fullName>
    </recommendedName>
</protein>
<comment type="function">
    <text evidence="1">SNAREs, soluble N-ethylmaleimide-sensitive factor-attachment protein receptors, are essential proteins for fusion of cellular membranes. SNAREs localized on opposing membranes assemble to form a trans-SNARE complex, an extended, parallel four alpha-helical bundle that drives membrane fusion. STX17 is a SNARE of the autophagosome involved in autophagy through the direct control of autophagosome membrane fusion with the lysosome membrane. May also play a role in the early secretory pathway where it may maintain the architecture of the endoplasmic reticulum-Golgi intermediate compartment/ERGIC and Golgi and/or regulate transport between the endoplasmic reticulum, the ERGIC and the Golgi (By similarity).</text>
</comment>
<comment type="subunit">
    <text evidence="1 4 5 6">Forms a SNARE complex composed of VAMP8, SNAP29 and STX17 involved in fusion of autophagosome with lysosome (By similarity). May interact with VAMP7 (By similarity). May interact with VTI1B (By similarity). Probably interacts with BET1, SCFD1 and SEC22B (PubMed:10930465). Interacts with PTPN2 and ABL1; involved in STX17 phosphorylation (PubMed:23006999). Interacts with COPB1 (PubMed:21545355). Interacts with TMED9 and TMED10; the interaction is direct (PubMed:21545355). Interacts with RUBCNL/PACER; promoting targeting of RUBCNL/PACER to autophagosome (By similarity). Interacts with VAMP8, SNAP29, VPS39 and VPS41; these interactions are increased in the absence of TMEM39A (By similarity). Interacts with IRGM; promoting STX17 recruitment to autophagosomes (By similarity). Interacts with ATG8 proteins GABARAP and MAP1LC3B (By similarity). Interacts with RNF115; this interaction enhances STX17 stability which in turn promotes autophagosome maturation (By similarity). Interacts with RAB39A (GTP-bound); the interaction promotes autophagosome-lysosome membrane fusion driven by STX17-SNAP29-VAMP8 (By similarity). Interacts with RAB39B; the interaction may promote a different fonction in autophagy as compared with RAB39A (By similarity).</text>
</comment>
<comment type="subcellular location">
    <subcellularLocation>
        <location evidence="5">Endoplasmic reticulum membrane</location>
        <topology evidence="2">Multi-pass membrane protein</topology>
    </subcellularLocation>
    <subcellularLocation>
        <location evidence="4">Smooth endoplasmic reticulum membrane</location>
        <topology evidence="2">Multi-pass membrane protein</topology>
    </subcellularLocation>
    <subcellularLocation>
        <location evidence="5">Endoplasmic reticulum-Golgi intermediate compartment membrane</location>
        <topology evidence="2">Multi-pass membrane protein</topology>
    </subcellularLocation>
    <subcellularLocation>
        <location evidence="1">Cytoplasmic vesicle</location>
        <location evidence="1">Autophagosome membrane</location>
        <topology evidence="2">Multi-pass membrane protein</topology>
    </subcellularLocation>
    <subcellularLocation>
        <location evidence="4">Cytoplasmic vesicle</location>
        <location evidence="4">COPII-coated vesicle membrane</location>
        <topology evidence="2">Multi-pass membrane protein</topology>
    </subcellularLocation>
    <subcellularLocation>
        <location evidence="4">Cytoplasm</location>
        <location evidence="4">Cytosol</location>
    </subcellularLocation>
    <subcellularLocation>
        <location evidence="1">Mitochondrion membrane</location>
        <topology evidence="2">Multi-pass membrane protein</topology>
    </subcellularLocation>
    <subcellularLocation>
        <location evidence="1">Autolysosome membrane</location>
        <topology evidence="2">Multi-pass membrane protein</topology>
    </subcellularLocation>
    <text evidence="1">Has a hairpin-like insertion into membranes. Localized into endoplasmic reticulum membranes, it also localizes to the completed autophagosome membrane upon cell starvation (By similarity). Colocalized with RAB39A and RAB39B in autolysosomes in autophagy-induced conditions (By similarity).</text>
</comment>
<comment type="tissue specificity">
    <text evidence="4 7">Detected in all tissues examined with higher expression in steroidogenic tissues including testis and adrenal gland (at protein level). Highly expressed in liver and testis. Also found in brain, heart, kidney, lung, placenta, skeletal muscle and spleen.</text>
</comment>
<comment type="PTM">
    <text evidence="6">Phosphorylated at Tyr-156 probably by ABL1. Dephosphorylation by PTPN2; regulates exit from the endoplasmic reticulum.</text>
</comment>
<comment type="similarity">
    <text evidence="9">Belongs to the syntaxin family.</text>
</comment>
<gene>
    <name evidence="1" type="primary">Stx17</name>
</gene>
<proteinExistence type="evidence at protein level"/>
<keyword id="KW-0007">Acetylation</keyword>
<keyword id="KW-0072">Autophagy</keyword>
<keyword id="KW-0175">Coiled coil</keyword>
<keyword id="KW-0963">Cytoplasm</keyword>
<keyword id="KW-0968">Cytoplasmic vesicle</keyword>
<keyword id="KW-0256">Endoplasmic reticulum</keyword>
<keyword id="KW-0931">ER-Golgi transport</keyword>
<keyword id="KW-0458">Lysosome</keyword>
<keyword id="KW-0472">Membrane</keyword>
<keyword id="KW-0496">Mitochondrion</keyword>
<keyword id="KW-0597">Phosphoprotein</keyword>
<keyword id="KW-1185">Reference proteome</keyword>
<keyword id="KW-0812">Transmembrane</keyword>
<keyword id="KW-1133">Transmembrane helix</keyword>
<keyword id="KW-0813">Transport</keyword>
<feature type="initiator methionine" description="Removed" evidence="1">
    <location>
        <position position="1"/>
    </location>
</feature>
<feature type="chain" id="PRO_0000210230" description="Syntaxin-17">
    <location>
        <begin position="2"/>
        <end position="301"/>
    </location>
</feature>
<feature type="topological domain" description="Cytoplasmic" evidence="2">
    <location>
        <begin position="2"/>
        <end position="227"/>
    </location>
</feature>
<feature type="transmembrane region" description="Helical" evidence="2">
    <location>
        <begin position="228"/>
        <end position="248"/>
    </location>
</feature>
<feature type="topological domain" description="Lumenal" evidence="2">
    <location>
        <begin position="249"/>
        <end position="253"/>
    </location>
</feature>
<feature type="transmembrane region" description="Helical" evidence="2">
    <location>
        <begin position="254"/>
        <end position="274"/>
    </location>
</feature>
<feature type="topological domain" description="Cytoplasmic" evidence="2">
    <location>
        <begin position="275"/>
        <end position="301"/>
    </location>
</feature>
<feature type="domain" description="t-SNARE coiled-coil homology" evidence="3">
    <location>
        <begin position="161"/>
        <end position="223"/>
    </location>
</feature>
<feature type="region of interest" description="Necessary and sufficient for localization to autophagosome" evidence="1">
    <location>
        <begin position="228"/>
        <end position="274"/>
    </location>
</feature>
<feature type="region of interest" description="Required for interaction with COPB1, TMED9 and TMED10" evidence="5">
    <location>
        <begin position="273"/>
        <end position="301"/>
    </location>
</feature>
<feature type="coiled-coil region" evidence="2">
    <location>
        <begin position="49"/>
        <end position="128"/>
    </location>
</feature>
<feature type="short sequence motif" description="Endoplasmic reticulum retention signal" evidence="2">
    <location>
        <begin position="298"/>
        <end position="301"/>
    </location>
</feature>
<feature type="modified residue" description="N-acetylserine" evidence="1">
    <location>
        <position position="2"/>
    </location>
</feature>
<feature type="modified residue" description="N6-acetyllysine" evidence="1">
    <location>
        <position position="41"/>
    </location>
</feature>
<feature type="modified residue" description="Phosphotyrosine; by ABL1" evidence="6">
    <location>
        <position position="156"/>
    </location>
</feature>
<feature type="modified residue" description="Phosphoserine" evidence="1">
    <location>
        <position position="288"/>
    </location>
</feature>
<feature type="mutagenesis site" description="Alters interaction with COPB1 but not with SEC24C." evidence="5 6">
    <original>Y</original>
    <variation>E</variation>
    <location>
        <position position="156"/>
    </location>
</feature>
<feature type="mutagenesis site" description="Prevents phosphorylation by ABL1 and impairs transport from the endoplasmic reticulum to the endoplasmic reticulum-Golgi intermediate compartment." evidence="5 6">
    <original>Y</original>
    <variation>F</variation>
    <location>
        <position position="156"/>
    </location>
</feature>
<accession>Q9Z158</accession>
<organism>
    <name type="scientific">Rattus norvegicus</name>
    <name type="common">Rat</name>
    <dbReference type="NCBI Taxonomy" id="10116"/>
    <lineage>
        <taxon>Eukaryota</taxon>
        <taxon>Metazoa</taxon>
        <taxon>Chordata</taxon>
        <taxon>Craniata</taxon>
        <taxon>Vertebrata</taxon>
        <taxon>Euteleostomi</taxon>
        <taxon>Mammalia</taxon>
        <taxon>Eutheria</taxon>
        <taxon>Euarchontoglires</taxon>
        <taxon>Glires</taxon>
        <taxon>Rodentia</taxon>
        <taxon>Myomorpha</taxon>
        <taxon>Muroidea</taxon>
        <taxon>Muridae</taxon>
        <taxon>Murinae</taxon>
        <taxon>Rattus</taxon>
    </lineage>
</organism>
<evidence type="ECO:0000250" key="1">
    <source>
        <dbReference type="UniProtKB" id="P56962"/>
    </source>
</evidence>
<evidence type="ECO:0000255" key="2"/>
<evidence type="ECO:0000255" key="3">
    <source>
        <dbReference type="PROSITE-ProRule" id="PRU00202"/>
    </source>
</evidence>
<evidence type="ECO:0000269" key="4">
    <source>
    </source>
</evidence>
<evidence type="ECO:0000269" key="5">
    <source>
    </source>
</evidence>
<evidence type="ECO:0000269" key="6">
    <source>
    </source>
</evidence>
<evidence type="ECO:0000269" key="7">
    <source>
    </source>
</evidence>
<evidence type="ECO:0000303" key="8">
    <source>
    </source>
</evidence>
<evidence type="ECO:0000305" key="9"/>
<reference key="1">
    <citation type="journal article" date="1998" name="J. Biol. Chem.">
        <title>Three novel proteins of the syntaxin/SNAP-25 family.</title>
        <authorList>
            <person name="Steegmaier M."/>
            <person name="Yang B."/>
            <person name="Yoo J.-S."/>
            <person name="Huang B."/>
            <person name="Shen M."/>
            <person name="Yu S."/>
            <person name="Luo Y."/>
            <person name="Scheller R.H."/>
        </authorList>
    </citation>
    <scope>NUCLEOTIDE SEQUENCE [MRNA]</scope>
    <scope>TISSUE SPECIFICITY</scope>
    <source>
        <tissue>Brain</tissue>
    </source>
</reference>
<reference key="2">
    <citation type="journal article" date="2000" name="Mol. Biol. Cell">
        <title>Syntaxin 17 is abundant in steroidogenic cells and implicated in smooth endoplasmic reticulum membrane dynamics.</title>
        <authorList>
            <person name="Steegmaier M."/>
            <person name="Oorschot V."/>
            <person name="Klumperman J."/>
            <person name="Scheller R.H."/>
        </authorList>
    </citation>
    <scope>SUBCELLULAR LOCATION</scope>
    <scope>INTERACTION WITH BET1; SCFD1 AND SEC22B</scope>
    <scope>TISSUE SPECIFICITY</scope>
</reference>
<reference key="3">
    <citation type="journal article" date="2011" name="Biol. Cell">
        <title>Syntaxin 17 cycles between the ER and ERGIC and is required to maintain the architecture of ERGIC and Golgi.</title>
        <authorList>
            <person name="Muppirala M."/>
            <person name="Gupta V."/>
            <person name="Swarup G."/>
        </authorList>
    </citation>
    <scope>SUBCELLULAR LOCATION</scope>
    <scope>MUTAGENESIS OF TYR-156</scope>
    <scope>INTERACTION WITH COPB1; TMED9 AND TMED10</scope>
</reference>
<reference key="4">
    <citation type="journal article" date="2012" name="Biochim. Biophys. Acta">
        <title>Tyrosine phosphorylation of a SNARE protein, Syntaxin 17: Implications for membrane trafficking in the early secretory pathway.</title>
        <authorList>
            <person name="Muppirala M."/>
            <person name="Gupta V."/>
            <person name="Swarup G."/>
        </authorList>
    </citation>
    <scope>INTERACTION WITH ABL1</scope>
    <scope>PHOSPHORYLATION AT TYR-156 BY ABL1</scope>
    <scope>DEPHOSPHORYLATION BY PTPN2</scope>
    <scope>MUTAGENESIS OF TYR-156</scope>
</reference>
<sequence length="301" mass="33182">MSEDEEKVKLRRLEPAIQKFTKIVIPTDLERLKKHQINIEKYQRCRIWDKLHEEHINAGRTVQQLRSNIREMEKLCLKVHKDDLILLKRMIDPMKEAAAAATAEFLQLHLESVEELKKQVKNEEALLQPSLTRSTTIDGVHTGEAEAASQSLTQIYALPEIPRDQNAAESWETLEADLIELSHLVTDMSLLVNSQQEKIDSIADHVNSAAVNVEEGTKNLQKAAKYKLAALPVAGAVIGGVVGGPIGLLAGFKVAGIAAALGGGVLGFTGGKLIQRRKQKMMEKLTSSCPDLPSQSDKKCS</sequence>